<protein>
    <recommendedName>
        <fullName>Uncharacterized protein aq_2172</fullName>
    </recommendedName>
</protein>
<proteinExistence type="inferred from homology"/>
<sequence length="165" mass="19360">MIRGFFLILLFLLLAFFSENYVRSLEKLKEEITVRSELKGVEIQLYGEKGLEWRIQGKTLTYADNQVVINEPVIRTQDYTITSEKLYMNKKTRKGRLEGNVEIRGPNLYLRTTNAYIDLVKNISWGYNELILRKDTNVIKGRGFKIFFKPFKVQINEVESIHTTS</sequence>
<dbReference type="EMBL" id="AE000657">
    <property type="protein sequence ID" value="AAC07890.1"/>
    <property type="molecule type" value="Genomic_DNA"/>
</dbReference>
<dbReference type="PIR" id="E70486">
    <property type="entry name" value="E70486"/>
</dbReference>
<dbReference type="RefSeq" id="NP_214490.1">
    <property type="nucleotide sequence ID" value="NC_000918.1"/>
</dbReference>
<dbReference type="RefSeq" id="WP_010881426.1">
    <property type="nucleotide sequence ID" value="NC_000918.1"/>
</dbReference>
<dbReference type="SMR" id="O67921"/>
<dbReference type="STRING" id="224324.aq_2172"/>
<dbReference type="EnsemblBacteria" id="AAC07890">
    <property type="protein sequence ID" value="AAC07890"/>
    <property type="gene ID" value="aq_2172"/>
</dbReference>
<dbReference type="KEGG" id="aae:aq_2172"/>
<dbReference type="HOGENOM" id="CLU_137998_0_0_0"/>
<dbReference type="InParanoid" id="O67921"/>
<dbReference type="OrthoDB" id="14699at2"/>
<dbReference type="Proteomes" id="UP000000798">
    <property type="component" value="Chromosome"/>
</dbReference>
<dbReference type="InterPro" id="IPR010664">
    <property type="entry name" value="LipoPS_assembly_LptC-rel"/>
</dbReference>
<dbReference type="Pfam" id="PF06835">
    <property type="entry name" value="LptC"/>
    <property type="match status" value="1"/>
</dbReference>
<accession>O67921</accession>
<organism>
    <name type="scientific">Aquifex aeolicus (strain VF5)</name>
    <dbReference type="NCBI Taxonomy" id="224324"/>
    <lineage>
        <taxon>Bacteria</taxon>
        <taxon>Pseudomonadati</taxon>
        <taxon>Aquificota</taxon>
        <taxon>Aquificia</taxon>
        <taxon>Aquificales</taxon>
        <taxon>Aquificaceae</taxon>
        <taxon>Aquifex</taxon>
    </lineage>
</organism>
<reference key="1">
    <citation type="journal article" date="1998" name="Nature">
        <title>The complete genome of the hyperthermophilic bacterium Aquifex aeolicus.</title>
        <authorList>
            <person name="Deckert G."/>
            <person name="Warren P.V."/>
            <person name="Gaasterland T."/>
            <person name="Young W.G."/>
            <person name="Lenox A.L."/>
            <person name="Graham D.E."/>
            <person name="Overbeek R."/>
            <person name="Snead M.A."/>
            <person name="Keller M."/>
            <person name="Aujay M."/>
            <person name="Huber R."/>
            <person name="Feldman R.A."/>
            <person name="Short J.M."/>
            <person name="Olsen G.J."/>
            <person name="Swanson R.V."/>
        </authorList>
    </citation>
    <scope>NUCLEOTIDE SEQUENCE [LARGE SCALE GENOMIC DNA]</scope>
    <source>
        <strain>VF5</strain>
    </source>
</reference>
<feature type="signal peptide" evidence="1">
    <location>
        <begin position="1"/>
        <end position="17"/>
    </location>
</feature>
<feature type="chain" id="PRO_0000013630" description="Uncharacterized protein aq_2172">
    <location>
        <begin position="18"/>
        <end position="165"/>
    </location>
</feature>
<evidence type="ECO:0000255" key="1"/>
<gene>
    <name type="ordered locus">aq_2172</name>
</gene>
<keyword id="KW-1185">Reference proteome</keyword>
<keyword id="KW-0732">Signal</keyword>
<name>Y2172_AQUAE</name>